<evidence type="ECO:0000250" key="1">
    <source>
        <dbReference type="UniProtKB" id="Q86W50"/>
    </source>
</evidence>
<evidence type="ECO:0000269" key="2">
    <source>
    </source>
</evidence>
<evidence type="ECO:0000305" key="3"/>
<evidence type="ECO:0000305" key="4">
    <source>
    </source>
</evidence>
<organism>
    <name type="scientific">Schizosaccharomyces pombe (strain 972 / ATCC 24843)</name>
    <name type="common">Fission yeast</name>
    <dbReference type="NCBI Taxonomy" id="284812"/>
    <lineage>
        <taxon>Eukaryota</taxon>
        <taxon>Fungi</taxon>
        <taxon>Dikarya</taxon>
        <taxon>Ascomycota</taxon>
        <taxon>Taphrinomycotina</taxon>
        <taxon>Schizosaccharomycetes</taxon>
        <taxon>Schizosaccharomycetales</taxon>
        <taxon>Schizosaccharomycetaceae</taxon>
        <taxon>Schizosaccharomyces</taxon>
    </lineage>
</organism>
<feature type="chain" id="PRO_0000339418" description="U6 small nuclear RNA (adenine-(43)-N(6))-methyltransferase">
    <location>
        <begin position="1"/>
        <end position="385"/>
    </location>
</feature>
<feature type="binding site" evidence="1">
    <location>
        <position position="54"/>
    </location>
    <ligand>
        <name>S-adenosyl-L-methionine</name>
        <dbReference type="ChEBI" id="CHEBI:59789"/>
    </ligand>
</feature>
<feature type="binding site" evidence="1">
    <location>
        <position position="83"/>
    </location>
    <ligand>
        <name>S-adenosyl-L-methionine</name>
        <dbReference type="ChEBI" id="CHEBI:59789"/>
    </ligand>
</feature>
<feature type="binding site" evidence="1">
    <location>
        <position position="106"/>
    </location>
    <ligand>
        <name>S-adenosyl-L-methionine</name>
        <dbReference type="ChEBI" id="CHEBI:59789"/>
    </ligand>
</feature>
<feature type="binding site" evidence="1">
    <location>
        <position position="155"/>
    </location>
    <ligand>
        <name>S-adenosyl-L-methionine</name>
        <dbReference type="ChEBI" id="CHEBI:59789"/>
    </ligand>
</feature>
<sequence length="385" mass="44422">MPIYILIERSVKNGRIDFWNEDAIRTLGKAILDRDYSLRVEFPENRLCPMVPNRATYIRYIHDLLSSTSGQKDKKRIIGLDIGTGASCIYPLLGCRMYSYDFVGTEIDKFSFETAKSNILQNNMESQIKIVLRSKQDCLLPDTEGMEEFTFVMCNPPFYEHEEDFINFKQNPPSGVCTGVYHEMVTEGGEVGFANKILTESKKRKGIQWYTCMFGKKSSVPAVVDKLREQNISNYGIYELALGKTKRWIICWSFQAMRPHNELIRPSSTSLSKYFPHKVLQNWTLDPELCAQIDDILQKFLDDNKIPWSKKGSVLEISTKSITWSRKARRISKSQTSVSSLEGQMKCELNVIDNQLQCKWIEGYDYNVYESFCSALARALRDNKK</sequence>
<comment type="function">
    <text evidence="4">RNA N6-methyltransferase that mediates N6-methylation of adenine of U6 small nuclear RNA (U6 snRNA).</text>
</comment>
<comment type="catalytic activity">
    <reaction evidence="4">
        <text>adenosine in U6 snRNA + S-adenosyl-L-methionine = N(6)-methyladenosine in U6 snRNA + S-adenosyl-L-homocysteine + H(+)</text>
        <dbReference type="Rhea" id="RHEA:52808"/>
        <dbReference type="Rhea" id="RHEA-COMP:13573"/>
        <dbReference type="Rhea" id="RHEA-COMP:13574"/>
        <dbReference type="ChEBI" id="CHEBI:15378"/>
        <dbReference type="ChEBI" id="CHEBI:57856"/>
        <dbReference type="ChEBI" id="CHEBI:59789"/>
        <dbReference type="ChEBI" id="CHEBI:74411"/>
        <dbReference type="ChEBI" id="CHEBI:74449"/>
        <dbReference type="EC" id="2.1.1.346"/>
    </reaction>
</comment>
<comment type="subcellular location">
    <subcellularLocation>
        <location evidence="2">Cytoplasm</location>
    </subcellularLocation>
    <subcellularLocation>
        <location evidence="2">Nucleus</location>
    </subcellularLocation>
</comment>
<comment type="similarity">
    <text evidence="3">Belongs to the methyltransferase superfamily. METTL16/RlmF family.</text>
</comment>
<proteinExistence type="evidence at protein level"/>
<protein>
    <recommendedName>
        <fullName>U6 small nuclear RNA (adenine-(43)-N(6))-methyltransferase</fullName>
        <ecNumber evidence="4">2.1.1.346</ecNumber>
    </recommendedName>
</protein>
<reference key="1">
    <citation type="journal article" date="2002" name="Nature">
        <title>The genome sequence of Schizosaccharomyces pombe.</title>
        <authorList>
            <person name="Wood V."/>
            <person name="Gwilliam R."/>
            <person name="Rajandream M.A."/>
            <person name="Lyne M.H."/>
            <person name="Lyne R."/>
            <person name="Stewart A."/>
            <person name="Sgouros J.G."/>
            <person name="Peat N."/>
            <person name="Hayles J."/>
            <person name="Baker S.G."/>
            <person name="Basham D."/>
            <person name="Bowman S."/>
            <person name="Brooks K."/>
            <person name="Brown D."/>
            <person name="Brown S."/>
            <person name="Chillingworth T."/>
            <person name="Churcher C.M."/>
            <person name="Collins M."/>
            <person name="Connor R."/>
            <person name="Cronin A."/>
            <person name="Davis P."/>
            <person name="Feltwell T."/>
            <person name="Fraser A."/>
            <person name="Gentles S."/>
            <person name="Goble A."/>
            <person name="Hamlin N."/>
            <person name="Harris D.E."/>
            <person name="Hidalgo J."/>
            <person name="Hodgson G."/>
            <person name="Holroyd S."/>
            <person name="Hornsby T."/>
            <person name="Howarth S."/>
            <person name="Huckle E.J."/>
            <person name="Hunt S."/>
            <person name="Jagels K."/>
            <person name="James K.D."/>
            <person name="Jones L."/>
            <person name="Jones M."/>
            <person name="Leather S."/>
            <person name="McDonald S."/>
            <person name="McLean J."/>
            <person name="Mooney P."/>
            <person name="Moule S."/>
            <person name="Mungall K.L."/>
            <person name="Murphy L.D."/>
            <person name="Niblett D."/>
            <person name="Odell C."/>
            <person name="Oliver K."/>
            <person name="O'Neil S."/>
            <person name="Pearson D."/>
            <person name="Quail M.A."/>
            <person name="Rabbinowitsch E."/>
            <person name="Rutherford K.M."/>
            <person name="Rutter S."/>
            <person name="Saunders D."/>
            <person name="Seeger K."/>
            <person name="Sharp S."/>
            <person name="Skelton J."/>
            <person name="Simmonds M.N."/>
            <person name="Squares R."/>
            <person name="Squares S."/>
            <person name="Stevens K."/>
            <person name="Taylor K."/>
            <person name="Taylor R.G."/>
            <person name="Tivey A."/>
            <person name="Walsh S.V."/>
            <person name="Warren T."/>
            <person name="Whitehead S."/>
            <person name="Woodward J.R."/>
            <person name="Volckaert G."/>
            <person name="Aert R."/>
            <person name="Robben J."/>
            <person name="Grymonprez B."/>
            <person name="Weltjens I."/>
            <person name="Vanstreels E."/>
            <person name="Rieger M."/>
            <person name="Schaefer M."/>
            <person name="Mueller-Auer S."/>
            <person name="Gabel C."/>
            <person name="Fuchs M."/>
            <person name="Duesterhoeft A."/>
            <person name="Fritzc C."/>
            <person name="Holzer E."/>
            <person name="Moestl D."/>
            <person name="Hilbert H."/>
            <person name="Borzym K."/>
            <person name="Langer I."/>
            <person name="Beck A."/>
            <person name="Lehrach H."/>
            <person name="Reinhardt R."/>
            <person name="Pohl T.M."/>
            <person name="Eger P."/>
            <person name="Zimmermann W."/>
            <person name="Wedler H."/>
            <person name="Wambutt R."/>
            <person name="Purnelle B."/>
            <person name="Goffeau A."/>
            <person name="Cadieu E."/>
            <person name="Dreano S."/>
            <person name="Gloux S."/>
            <person name="Lelaure V."/>
            <person name="Mottier S."/>
            <person name="Galibert F."/>
            <person name="Aves S.J."/>
            <person name="Xiang Z."/>
            <person name="Hunt C."/>
            <person name="Moore K."/>
            <person name="Hurst S.M."/>
            <person name="Lucas M."/>
            <person name="Rochet M."/>
            <person name="Gaillardin C."/>
            <person name="Tallada V.A."/>
            <person name="Garzon A."/>
            <person name="Thode G."/>
            <person name="Daga R.R."/>
            <person name="Cruzado L."/>
            <person name="Jimenez J."/>
            <person name="Sanchez M."/>
            <person name="del Rey F."/>
            <person name="Benito J."/>
            <person name="Dominguez A."/>
            <person name="Revuelta J.L."/>
            <person name="Moreno S."/>
            <person name="Armstrong J."/>
            <person name="Forsburg S.L."/>
            <person name="Cerutti L."/>
            <person name="Lowe T."/>
            <person name="McCombie W.R."/>
            <person name="Paulsen I."/>
            <person name="Potashkin J."/>
            <person name="Shpakovski G.V."/>
            <person name="Ussery D."/>
            <person name="Barrell B.G."/>
            <person name="Nurse P."/>
        </authorList>
    </citation>
    <scope>NUCLEOTIDE SEQUENCE [LARGE SCALE GENOMIC DNA]</scope>
    <source>
        <strain>972 / ATCC 24843</strain>
    </source>
</reference>
<reference key="2">
    <citation type="journal article" date="2006" name="Nat. Biotechnol.">
        <title>ORFeome cloning and global analysis of protein localization in the fission yeast Schizosaccharomyces pombe.</title>
        <authorList>
            <person name="Matsuyama A."/>
            <person name="Arai R."/>
            <person name="Yashiroda Y."/>
            <person name="Shirai A."/>
            <person name="Kamata A."/>
            <person name="Sekido S."/>
            <person name="Kobayashi Y."/>
            <person name="Hashimoto A."/>
            <person name="Hamamoto M."/>
            <person name="Hiraoka Y."/>
            <person name="Horinouchi S."/>
            <person name="Yoshida M."/>
        </authorList>
    </citation>
    <scope>SUBCELLULAR LOCATION [LARGE SCALE ANALYSIS]</scope>
</reference>
<reference key="3">
    <citation type="journal article" date="2017" name="Cell">
        <title>The U6 snRNA m(6)A methyltransferase METTL16 regulates SAM synthetase intron retention.</title>
        <authorList>
            <person name="Pendleton K.E."/>
            <person name="Chen B."/>
            <person name="Liu K."/>
            <person name="Hunter O.V."/>
            <person name="Xie Y."/>
            <person name="Tu B.P."/>
            <person name="Conrad N.K."/>
        </authorList>
    </citation>
    <scope>FUNCTION</scope>
    <scope>CATALYTIC ACTIVITY</scope>
</reference>
<gene>
    <name type="ORF">SPAC27D7.08c</name>
</gene>
<dbReference type="EC" id="2.1.1.346" evidence="4"/>
<dbReference type="EMBL" id="CU329670">
    <property type="protein sequence ID" value="CAA15827.2"/>
    <property type="molecule type" value="Genomic_DNA"/>
</dbReference>
<dbReference type="PIR" id="T38441">
    <property type="entry name" value="T38441"/>
</dbReference>
<dbReference type="SMR" id="O42662"/>
<dbReference type="BioGRID" id="278696">
    <property type="interactions" value="4"/>
</dbReference>
<dbReference type="FunCoup" id="O42662">
    <property type="interactions" value="339"/>
</dbReference>
<dbReference type="STRING" id="284812.O42662"/>
<dbReference type="PaxDb" id="4896-SPAC27D7.08c.1"/>
<dbReference type="EnsemblFungi" id="SPAC27D7.08c.1">
    <property type="protein sequence ID" value="SPAC27D7.08c.1:pep"/>
    <property type="gene ID" value="SPAC27D7.08c"/>
</dbReference>
<dbReference type="KEGG" id="spo:2542223"/>
<dbReference type="PomBase" id="SPAC27D7.08c"/>
<dbReference type="VEuPathDB" id="FungiDB:SPAC27D7.08c"/>
<dbReference type="eggNOG" id="KOG2912">
    <property type="taxonomic scope" value="Eukaryota"/>
</dbReference>
<dbReference type="HOGENOM" id="CLU_027534_0_1_1"/>
<dbReference type="InParanoid" id="O42662"/>
<dbReference type="OMA" id="EHKIDNY"/>
<dbReference type="PhylomeDB" id="O42662"/>
<dbReference type="PRO" id="PR:O42662"/>
<dbReference type="Proteomes" id="UP000002485">
    <property type="component" value="Chromosome I"/>
</dbReference>
<dbReference type="GO" id="GO:0005829">
    <property type="term" value="C:cytosol"/>
    <property type="evidence" value="ECO:0007005"/>
    <property type="project" value="PomBase"/>
</dbReference>
<dbReference type="GO" id="GO:0005634">
    <property type="term" value="C:nucleus"/>
    <property type="evidence" value="ECO:0007005"/>
    <property type="project" value="PomBase"/>
</dbReference>
<dbReference type="GO" id="GO:0120048">
    <property type="term" value="F:U6 snRNA (adenine-(43)-N(6))-methyltransferase activity"/>
    <property type="evidence" value="ECO:0000315"/>
    <property type="project" value="UniProtKB"/>
</dbReference>
<dbReference type="GO" id="GO:0000398">
    <property type="term" value="P:mRNA splicing, via spliceosome"/>
    <property type="evidence" value="ECO:0000316"/>
    <property type="project" value="PomBase"/>
</dbReference>
<dbReference type="GO" id="GO:0070475">
    <property type="term" value="P:rRNA base methylation"/>
    <property type="evidence" value="ECO:0000318"/>
    <property type="project" value="GO_Central"/>
</dbReference>
<dbReference type="GO" id="GO:0120049">
    <property type="term" value="P:snRNA (adenine-N6)-methylation"/>
    <property type="evidence" value="ECO:0000315"/>
    <property type="project" value="UniProtKB"/>
</dbReference>
<dbReference type="CDD" id="cd02440">
    <property type="entry name" value="AdoMet_MTases"/>
    <property type="match status" value="1"/>
</dbReference>
<dbReference type="Gene3D" id="3.40.50.150">
    <property type="entry name" value="Vaccinia Virus protein VP39"/>
    <property type="match status" value="1"/>
</dbReference>
<dbReference type="InterPro" id="IPR017182">
    <property type="entry name" value="METTL16/PsiM"/>
</dbReference>
<dbReference type="InterPro" id="IPR010286">
    <property type="entry name" value="METTL16/RlmF"/>
</dbReference>
<dbReference type="InterPro" id="IPR029063">
    <property type="entry name" value="SAM-dependent_MTases_sf"/>
</dbReference>
<dbReference type="PANTHER" id="PTHR13393:SF0">
    <property type="entry name" value="RNA N6-ADENOSINE-METHYLTRANSFERASE METTL16"/>
    <property type="match status" value="1"/>
</dbReference>
<dbReference type="PANTHER" id="PTHR13393">
    <property type="entry name" value="SAM-DEPENDENT METHYLTRANSFERASE"/>
    <property type="match status" value="1"/>
</dbReference>
<dbReference type="Pfam" id="PF05971">
    <property type="entry name" value="Methyltransf_10"/>
    <property type="match status" value="1"/>
</dbReference>
<dbReference type="PIRSF" id="PIRSF037350">
    <property type="entry name" value="Mtase_ZK1128_prd"/>
    <property type="match status" value="1"/>
</dbReference>
<dbReference type="SUPFAM" id="SSF53335">
    <property type="entry name" value="S-adenosyl-L-methionine-dependent methyltransferases"/>
    <property type="match status" value="1"/>
</dbReference>
<name>MTL16_SCHPO</name>
<accession>O42662</accession>
<keyword id="KW-0963">Cytoplasm</keyword>
<keyword id="KW-0489">Methyltransferase</keyword>
<keyword id="KW-0539">Nucleus</keyword>
<keyword id="KW-1185">Reference proteome</keyword>
<keyword id="KW-0949">S-adenosyl-L-methionine</keyword>
<keyword id="KW-0808">Transferase</keyword>